<reference key="1">
    <citation type="journal article" date="2002" name="Proc. Natl. Acad. Sci. U.S.A.">
        <title>Genome sequence of Streptococcus mutans UA159, a cariogenic dental pathogen.</title>
        <authorList>
            <person name="Ajdic D.J."/>
            <person name="McShan W.M."/>
            <person name="McLaughlin R.E."/>
            <person name="Savic G."/>
            <person name="Chang J."/>
            <person name="Carson M.B."/>
            <person name="Primeaux C."/>
            <person name="Tian R."/>
            <person name="Kenton S."/>
            <person name="Jia H.G."/>
            <person name="Lin S.P."/>
            <person name="Qian Y."/>
            <person name="Li S."/>
            <person name="Zhu H."/>
            <person name="Najar F.Z."/>
            <person name="Lai H."/>
            <person name="White J."/>
            <person name="Roe B.A."/>
            <person name="Ferretti J.J."/>
        </authorList>
    </citation>
    <scope>NUCLEOTIDE SEQUENCE [LARGE SCALE GENOMIC DNA]</scope>
    <source>
        <strain>ATCC 700610 / UA159</strain>
    </source>
</reference>
<reference key="2">
    <citation type="journal article" date="2004" name="Infect. Immun.">
        <title>Streptococcus mutans surface alpha-enolase binds salivary mucin MG2 and human plasminogen.</title>
        <authorList>
            <person name="Ge J."/>
            <person name="Catt D.M."/>
            <person name="Gregory R.L."/>
        </authorList>
    </citation>
    <scope>IDENTIFICATION BY MASS SPECTROMETRY</scope>
    <scope>SUBCELLULAR LOCATION</scope>
    <scope>FUNCTION IN VIRULENCE</scope>
    <scope>PROBABLE PHOSPHORYLATION</scope>
    <scope>BINDING TO PLASMINOGEN AND HUMAN SALIVARY MUCIN</scope>
    <source>
        <strain>A32-2</strain>
    </source>
</reference>
<feature type="chain" id="PRO_0000133979" description="Enolase">
    <location>
        <begin position="1"/>
        <end position="432"/>
    </location>
</feature>
<feature type="active site" description="Proton donor" evidence="1">
    <location>
        <position position="205"/>
    </location>
</feature>
<feature type="active site" description="Proton acceptor" evidence="1">
    <location>
        <position position="341"/>
    </location>
</feature>
<feature type="binding site" evidence="1">
    <location>
        <position position="163"/>
    </location>
    <ligand>
        <name>(2R)-2-phosphoglycerate</name>
        <dbReference type="ChEBI" id="CHEBI:58289"/>
    </ligand>
</feature>
<feature type="binding site" evidence="1">
    <location>
        <position position="242"/>
    </location>
    <ligand>
        <name>Mg(2+)</name>
        <dbReference type="ChEBI" id="CHEBI:18420"/>
    </ligand>
</feature>
<feature type="binding site" evidence="1">
    <location>
        <position position="289"/>
    </location>
    <ligand>
        <name>Mg(2+)</name>
        <dbReference type="ChEBI" id="CHEBI:18420"/>
    </ligand>
</feature>
<feature type="binding site" evidence="1">
    <location>
        <position position="316"/>
    </location>
    <ligand>
        <name>Mg(2+)</name>
        <dbReference type="ChEBI" id="CHEBI:18420"/>
    </ligand>
</feature>
<feature type="binding site" evidence="1">
    <location>
        <position position="341"/>
    </location>
    <ligand>
        <name>(2R)-2-phosphoglycerate</name>
        <dbReference type="ChEBI" id="CHEBI:58289"/>
    </ligand>
</feature>
<feature type="binding site" evidence="1">
    <location>
        <position position="370"/>
    </location>
    <ligand>
        <name>(2R)-2-phosphoglycerate</name>
        <dbReference type="ChEBI" id="CHEBI:58289"/>
    </ligand>
</feature>
<feature type="binding site" evidence="1">
    <location>
        <position position="371"/>
    </location>
    <ligand>
        <name>(2R)-2-phosphoglycerate</name>
        <dbReference type="ChEBI" id="CHEBI:58289"/>
    </ligand>
</feature>
<feature type="binding site" evidence="1">
    <location>
        <position position="392"/>
    </location>
    <ligand>
        <name>(2R)-2-phosphoglycerate</name>
        <dbReference type="ChEBI" id="CHEBI:58289"/>
    </ligand>
</feature>
<organism>
    <name type="scientific">Streptococcus mutans serotype c (strain ATCC 700610 / UA159)</name>
    <dbReference type="NCBI Taxonomy" id="210007"/>
    <lineage>
        <taxon>Bacteria</taxon>
        <taxon>Bacillati</taxon>
        <taxon>Bacillota</taxon>
        <taxon>Bacilli</taxon>
        <taxon>Lactobacillales</taxon>
        <taxon>Streptococcaceae</taxon>
        <taxon>Streptococcus</taxon>
    </lineage>
</organism>
<evidence type="ECO:0000255" key="1">
    <source>
        <dbReference type="HAMAP-Rule" id="MF_00318"/>
    </source>
</evidence>
<evidence type="ECO:0000269" key="2">
    <source>
    </source>
</evidence>
<evidence type="ECO:0000305" key="3">
    <source>
    </source>
</evidence>
<name>ENO_STRMU</name>
<comment type="function">
    <text evidence="1">Catalyzes the reversible conversion of 2-phosphoglycerate (2-PG) into phosphoenolpyruvate (PEP). It is essential for the degradation of carbohydrates via glycolysis.</text>
</comment>
<comment type="function">
    <text evidence="2">'Moonlights' as a plasminogen receptor. Binds plasminogen and human salivary mucin MG2 when expressed on the bacterial cell surface, potentially allowing the bacterium to acquire surface-associated proteolytic activity that may help the dissemination through oral tissues and entrance into the blood stream.</text>
</comment>
<comment type="catalytic activity">
    <reaction evidence="1">
        <text>(2R)-2-phosphoglycerate = phosphoenolpyruvate + H2O</text>
        <dbReference type="Rhea" id="RHEA:10164"/>
        <dbReference type="ChEBI" id="CHEBI:15377"/>
        <dbReference type="ChEBI" id="CHEBI:58289"/>
        <dbReference type="ChEBI" id="CHEBI:58702"/>
        <dbReference type="EC" id="4.2.1.11"/>
    </reaction>
</comment>
<comment type="cofactor">
    <cofactor evidence="1">
        <name>Mg(2+)</name>
        <dbReference type="ChEBI" id="CHEBI:18420"/>
    </cofactor>
    <text evidence="1">Binds a second Mg(2+) ion via substrate during catalysis.</text>
</comment>
<comment type="pathway">
    <text evidence="1">Carbohydrate degradation; glycolysis; pyruvate from D-glyceraldehyde 3-phosphate: step 4/5.</text>
</comment>
<comment type="subcellular location">
    <subcellularLocation>
        <location evidence="1 2">Cytoplasm</location>
    </subcellularLocation>
    <subcellularLocation>
        <location evidence="1 2">Secreted</location>
    </subcellularLocation>
    <subcellularLocation>
        <location evidence="1 2">Cell surface</location>
    </subcellularLocation>
    <text evidence="1 2">Fractions of enolase are present in both the cytoplasm and on the cell surface (PubMed:15501816). Once secreted, it remains attached to the cell surface (PubMed:15501816).</text>
</comment>
<comment type="PTM">
    <text evidence="3">Probably phosphorylated (PubMed:15501816).</text>
</comment>
<comment type="similarity">
    <text evidence="1">Belongs to the enolase family.</text>
</comment>
<gene>
    <name evidence="1" type="primary">eno</name>
    <name type="ordered locus">SMU_1247</name>
</gene>
<accession>Q8DTS9</accession>
<protein>
    <recommendedName>
        <fullName evidence="1">Enolase</fullName>
        <ecNumber evidence="1">4.2.1.11</ecNumber>
    </recommendedName>
    <alternativeName>
        <fullName evidence="1">2-phospho-D-glycerate hydro-lyase</fullName>
    </alternativeName>
    <alternativeName>
        <fullName evidence="1">2-phosphoglycerate dehydratase</fullName>
    </alternativeName>
</protein>
<dbReference type="EC" id="4.2.1.11" evidence="1"/>
<dbReference type="EMBL" id="AE014133">
    <property type="protein sequence ID" value="AAN58930.1"/>
    <property type="molecule type" value="Genomic_DNA"/>
</dbReference>
<dbReference type="RefSeq" id="NP_721624.1">
    <property type="nucleotide sequence ID" value="NC_004350.2"/>
</dbReference>
<dbReference type="RefSeq" id="WP_002263196.1">
    <property type="nucleotide sequence ID" value="NC_004350.2"/>
</dbReference>
<dbReference type="SMR" id="Q8DTS9"/>
<dbReference type="STRING" id="210007.SMU_1247"/>
<dbReference type="MoonProt" id="Q8DTS9"/>
<dbReference type="GeneID" id="93859274"/>
<dbReference type="KEGG" id="smu:SMU_1247"/>
<dbReference type="PATRIC" id="fig|210007.7.peg.1117"/>
<dbReference type="eggNOG" id="COG0148">
    <property type="taxonomic scope" value="Bacteria"/>
</dbReference>
<dbReference type="HOGENOM" id="CLU_031223_2_1_9"/>
<dbReference type="OrthoDB" id="9804716at2"/>
<dbReference type="PhylomeDB" id="Q8DTS9"/>
<dbReference type="BioCyc" id="MetaCyc:MONOMER-13099"/>
<dbReference type="SABIO-RK" id="Q8DTS9"/>
<dbReference type="UniPathway" id="UPA00109">
    <property type="reaction ID" value="UER00187"/>
</dbReference>
<dbReference type="Proteomes" id="UP000002512">
    <property type="component" value="Chromosome"/>
</dbReference>
<dbReference type="GO" id="GO:0009986">
    <property type="term" value="C:cell surface"/>
    <property type="evidence" value="ECO:0007669"/>
    <property type="project" value="UniProtKB-SubCell"/>
</dbReference>
<dbReference type="GO" id="GO:0005737">
    <property type="term" value="C:cytoplasm"/>
    <property type="evidence" value="ECO:0000314"/>
    <property type="project" value="CAFA"/>
</dbReference>
<dbReference type="GO" id="GO:0005576">
    <property type="term" value="C:extracellular region"/>
    <property type="evidence" value="ECO:0000314"/>
    <property type="project" value="CAFA"/>
</dbReference>
<dbReference type="GO" id="GO:0009274">
    <property type="term" value="C:peptidoglycan-based cell wall"/>
    <property type="evidence" value="ECO:0000314"/>
    <property type="project" value="CAFA"/>
</dbReference>
<dbReference type="GO" id="GO:0000015">
    <property type="term" value="C:phosphopyruvate hydratase complex"/>
    <property type="evidence" value="ECO:0007669"/>
    <property type="project" value="InterPro"/>
</dbReference>
<dbReference type="GO" id="GO:0000287">
    <property type="term" value="F:magnesium ion binding"/>
    <property type="evidence" value="ECO:0007669"/>
    <property type="project" value="UniProtKB-UniRule"/>
</dbReference>
<dbReference type="GO" id="GO:0004634">
    <property type="term" value="F:phosphopyruvate hydratase activity"/>
    <property type="evidence" value="ECO:0000314"/>
    <property type="project" value="CAFA"/>
</dbReference>
<dbReference type="GO" id="GO:0035375">
    <property type="term" value="F:zymogen binding"/>
    <property type="evidence" value="ECO:0000353"/>
    <property type="project" value="CAFA"/>
</dbReference>
<dbReference type="GO" id="GO:0006096">
    <property type="term" value="P:glycolytic process"/>
    <property type="evidence" value="ECO:0007669"/>
    <property type="project" value="UniProtKB-UniRule"/>
</dbReference>
<dbReference type="CDD" id="cd03313">
    <property type="entry name" value="enolase"/>
    <property type="match status" value="1"/>
</dbReference>
<dbReference type="FunFam" id="3.20.20.120:FF:000001">
    <property type="entry name" value="Enolase"/>
    <property type="match status" value="1"/>
</dbReference>
<dbReference type="FunFam" id="3.30.390.10:FF:000001">
    <property type="entry name" value="Enolase"/>
    <property type="match status" value="1"/>
</dbReference>
<dbReference type="Gene3D" id="3.20.20.120">
    <property type="entry name" value="Enolase-like C-terminal domain"/>
    <property type="match status" value="1"/>
</dbReference>
<dbReference type="Gene3D" id="3.30.390.10">
    <property type="entry name" value="Enolase-like, N-terminal domain"/>
    <property type="match status" value="1"/>
</dbReference>
<dbReference type="HAMAP" id="MF_00318">
    <property type="entry name" value="Enolase"/>
    <property type="match status" value="1"/>
</dbReference>
<dbReference type="InterPro" id="IPR000941">
    <property type="entry name" value="Enolase"/>
</dbReference>
<dbReference type="InterPro" id="IPR036849">
    <property type="entry name" value="Enolase-like_C_sf"/>
</dbReference>
<dbReference type="InterPro" id="IPR029017">
    <property type="entry name" value="Enolase-like_N"/>
</dbReference>
<dbReference type="InterPro" id="IPR020810">
    <property type="entry name" value="Enolase_C"/>
</dbReference>
<dbReference type="InterPro" id="IPR020809">
    <property type="entry name" value="Enolase_CS"/>
</dbReference>
<dbReference type="InterPro" id="IPR020811">
    <property type="entry name" value="Enolase_N"/>
</dbReference>
<dbReference type="NCBIfam" id="TIGR01060">
    <property type="entry name" value="eno"/>
    <property type="match status" value="1"/>
</dbReference>
<dbReference type="PANTHER" id="PTHR11902">
    <property type="entry name" value="ENOLASE"/>
    <property type="match status" value="1"/>
</dbReference>
<dbReference type="PANTHER" id="PTHR11902:SF1">
    <property type="entry name" value="ENOLASE"/>
    <property type="match status" value="1"/>
</dbReference>
<dbReference type="Pfam" id="PF00113">
    <property type="entry name" value="Enolase_C"/>
    <property type="match status" value="1"/>
</dbReference>
<dbReference type="Pfam" id="PF03952">
    <property type="entry name" value="Enolase_N"/>
    <property type="match status" value="1"/>
</dbReference>
<dbReference type="PIRSF" id="PIRSF001400">
    <property type="entry name" value="Enolase"/>
    <property type="match status" value="1"/>
</dbReference>
<dbReference type="PRINTS" id="PR00148">
    <property type="entry name" value="ENOLASE"/>
</dbReference>
<dbReference type="SFLD" id="SFLDS00001">
    <property type="entry name" value="Enolase"/>
    <property type="match status" value="1"/>
</dbReference>
<dbReference type="SFLD" id="SFLDF00002">
    <property type="entry name" value="enolase"/>
    <property type="match status" value="1"/>
</dbReference>
<dbReference type="SMART" id="SM01192">
    <property type="entry name" value="Enolase_C"/>
    <property type="match status" value="1"/>
</dbReference>
<dbReference type="SMART" id="SM01193">
    <property type="entry name" value="Enolase_N"/>
    <property type="match status" value="1"/>
</dbReference>
<dbReference type="SUPFAM" id="SSF51604">
    <property type="entry name" value="Enolase C-terminal domain-like"/>
    <property type="match status" value="1"/>
</dbReference>
<dbReference type="SUPFAM" id="SSF54826">
    <property type="entry name" value="Enolase N-terminal domain-like"/>
    <property type="match status" value="1"/>
</dbReference>
<dbReference type="PROSITE" id="PS00164">
    <property type="entry name" value="ENOLASE"/>
    <property type="match status" value="1"/>
</dbReference>
<proteinExistence type="evidence at protein level"/>
<sequence>MSIITDVYAREVLDSRGNPTLEVEVYTESGAFGRGMVPSGASTGEHEAVELRDGDKSRYGGLGTQKAVDNVNNIIAEALIGYDVRDQQAIDKAMIALDGTPNKGKLGANAILGVSIAVARAAADFLEIPLYSYLGGFNTKVLPTPMMNIINGGSHSDAPIAFQEFMIVPAGAPTFKEALRWGAEIFHALKKILKERGLETAVGDEGGFAPKFDGTEDAVETIIKAIETAGYKPGEEVFLGFDCASSEFYDNGVYDYTKFEGEKGAKRSAAEQIDYIEELVNKYPIITIEDAMDENDWDGWKALTARLGDRVQLVGDDFFVTNTDYLARGIKEGAANSILIKVNQIGTLTETFEAIEMAKEAGYTAVVSHRSGETEDSTIADISVATNAGQIKTGSLSRTDRIAKYNQLLRIEDQLGEVAEYRGLKSFYNLKK</sequence>
<keyword id="KW-0963">Cytoplasm</keyword>
<keyword id="KW-0324">Glycolysis</keyword>
<keyword id="KW-0456">Lyase</keyword>
<keyword id="KW-0460">Magnesium</keyword>
<keyword id="KW-0479">Metal-binding</keyword>
<keyword id="KW-0597">Phosphoprotein</keyword>
<keyword id="KW-1185">Reference proteome</keyword>
<keyword id="KW-0964">Secreted</keyword>
<keyword id="KW-0843">Virulence</keyword>